<keyword id="KW-0058">Aromatic hydrocarbons catabolism</keyword>
<keyword id="KW-0456">Lyase</keyword>
<keyword id="KW-0479">Metal-binding</keyword>
<feature type="chain" id="PRO_1000165274" description="4-hydroxy-2-oxo-heptane-1,7-dioate aldolase">
    <location>
        <begin position="1"/>
        <end position="263"/>
    </location>
</feature>
<feature type="active site" description="Proton acceptor" evidence="1">
    <location>
        <position position="45"/>
    </location>
</feature>
<feature type="binding site" evidence="1">
    <location>
        <position position="147"/>
    </location>
    <ligand>
        <name>substrate</name>
    </ligand>
</feature>
<feature type="binding site" evidence="1">
    <location>
        <position position="149"/>
    </location>
    <ligand>
        <name>a divalent metal cation</name>
        <dbReference type="ChEBI" id="CHEBI:60240"/>
    </ligand>
</feature>
<feature type="binding site" evidence="1">
    <location>
        <position position="174"/>
    </location>
    <ligand>
        <name>substrate</name>
    </ligand>
</feature>
<feature type="binding site" evidence="1">
    <location>
        <position position="175"/>
    </location>
    <ligand>
        <name>a divalent metal cation</name>
        <dbReference type="ChEBI" id="CHEBI:60240"/>
    </ligand>
</feature>
<feature type="binding site" evidence="1">
    <location>
        <position position="175"/>
    </location>
    <ligand>
        <name>substrate</name>
    </ligand>
</feature>
<feature type="site" description="Transition state stabilizer" evidence="1">
    <location>
        <position position="70"/>
    </location>
</feature>
<feature type="site" description="Increases basicity of active site His" evidence="1">
    <location>
        <position position="84"/>
    </location>
</feature>
<dbReference type="EC" id="4.1.2.52" evidence="1"/>
<dbReference type="EMBL" id="CP000857">
    <property type="protein sequence ID" value="ACN46745.1"/>
    <property type="molecule type" value="Genomic_DNA"/>
</dbReference>
<dbReference type="RefSeq" id="WP_000785083.1">
    <property type="nucleotide sequence ID" value="NC_012125.1"/>
</dbReference>
<dbReference type="SMR" id="C0Q8A0"/>
<dbReference type="KEGG" id="sei:SPC_2644"/>
<dbReference type="HOGENOM" id="CLU_059964_1_0_6"/>
<dbReference type="UniPathway" id="UPA00208">
    <property type="reaction ID" value="UER00422"/>
</dbReference>
<dbReference type="Proteomes" id="UP000001599">
    <property type="component" value="Chromosome"/>
</dbReference>
<dbReference type="GO" id="GO:0005737">
    <property type="term" value="C:cytoplasm"/>
    <property type="evidence" value="ECO:0007669"/>
    <property type="project" value="TreeGrafter"/>
</dbReference>
<dbReference type="GO" id="GO:0043863">
    <property type="term" value="F:4-hydroxy-2-ketopimelate aldolase activity"/>
    <property type="evidence" value="ECO:0007669"/>
    <property type="project" value="RHEA"/>
</dbReference>
<dbReference type="GO" id="GO:0046872">
    <property type="term" value="F:metal ion binding"/>
    <property type="evidence" value="ECO:0007669"/>
    <property type="project" value="UniProtKB-UniRule"/>
</dbReference>
<dbReference type="GO" id="GO:1901023">
    <property type="term" value="P:4-hydroxyphenylacetate catabolic process"/>
    <property type="evidence" value="ECO:0007669"/>
    <property type="project" value="UniProtKB-UniRule"/>
</dbReference>
<dbReference type="GO" id="GO:0010124">
    <property type="term" value="P:phenylacetate catabolic process"/>
    <property type="evidence" value="ECO:0007669"/>
    <property type="project" value="InterPro"/>
</dbReference>
<dbReference type="FunFam" id="3.20.20.60:FF:000004">
    <property type="entry name" value="5-keto-4-deoxy-D-glucarate aldolase"/>
    <property type="match status" value="1"/>
</dbReference>
<dbReference type="Gene3D" id="3.20.20.60">
    <property type="entry name" value="Phosphoenolpyruvate-binding domains"/>
    <property type="match status" value="1"/>
</dbReference>
<dbReference type="HAMAP" id="MF_01292">
    <property type="entry name" value="HKHD_aldolase"/>
    <property type="match status" value="1"/>
</dbReference>
<dbReference type="InterPro" id="IPR005000">
    <property type="entry name" value="Aldolase/citrate-lyase_domain"/>
</dbReference>
<dbReference type="InterPro" id="IPR023701">
    <property type="entry name" value="HKHD_aldolase_ent"/>
</dbReference>
<dbReference type="InterPro" id="IPR012689">
    <property type="entry name" value="HpaI"/>
</dbReference>
<dbReference type="InterPro" id="IPR050251">
    <property type="entry name" value="HpcH-HpaI_aldolase"/>
</dbReference>
<dbReference type="InterPro" id="IPR015813">
    <property type="entry name" value="Pyrv/PenolPyrv_kinase-like_dom"/>
</dbReference>
<dbReference type="InterPro" id="IPR040442">
    <property type="entry name" value="Pyrv_kinase-like_dom_sf"/>
</dbReference>
<dbReference type="NCBIfam" id="TIGR02311">
    <property type="entry name" value="HpaI"/>
    <property type="match status" value="1"/>
</dbReference>
<dbReference type="PANTHER" id="PTHR30502">
    <property type="entry name" value="2-KETO-3-DEOXY-L-RHAMNONATE ALDOLASE"/>
    <property type="match status" value="1"/>
</dbReference>
<dbReference type="PANTHER" id="PTHR30502:SF0">
    <property type="entry name" value="PHOSPHOENOLPYRUVATE CARBOXYLASE FAMILY PROTEIN"/>
    <property type="match status" value="1"/>
</dbReference>
<dbReference type="Pfam" id="PF03328">
    <property type="entry name" value="HpcH_HpaI"/>
    <property type="match status" value="1"/>
</dbReference>
<dbReference type="SUPFAM" id="SSF51621">
    <property type="entry name" value="Phosphoenolpyruvate/pyruvate domain"/>
    <property type="match status" value="1"/>
</dbReference>
<accession>C0Q8A0</accession>
<gene>
    <name evidence="1" type="primary">hpcH</name>
    <name evidence="1" type="synonym">hpaI</name>
    <name type="ordered locus">SPC_2644</name>
</gene>
<protein>
    <recommendedName>
        <fullName evidence="1">4-hydroxy-2-oxo-heptane-1,7-dioate aldolase</fullName>
        <ecNumber evidence="1">4.1.2.52</ecNumber>
    </recommendedName>
    <alternativeName>
        <fullName evidence="1">2,4-dihydroxyhept-2-ene-1,7-dioic acid aldolase</fullName>
        <shortName evidence="1">HHED aldolase</shortName>
    </alternativeName>
    <alternativeName>
        <fullName evidence="1">4-hydroxy-2-ketoheptane-1,7-dioate aldolase</fullName>
        <shortName evidence="1">HKHD aldolase</shortName>
    </alternativeName>
</protein>
<evidence type="ECO:0000255" key="1">
    <source>
        <dbReference type="HAMAP-Rule" id="MF_01292"/>
    </source>
</evidence>
<comment type="function">
    <text evidence="1">Catalyzes the reversible retro-aldol cleavage of 4-hydroxy-2-ketoheptane-1,7-dioate (HKHD) to pyruvate and succinic semialdehyde.</text>
</comment>
<comment type="catalytic activity">
    <reaction evidence="1">
        <text>4-hydroxy-2-oxoheptanedioate = succinate semialdehyde + pyruvate</text>
        <dbReference type="Rhea" id="RHEA:25788"/>
        <dbReference type="ChEBI" id="CHEBI:15361"/>
        <dbReference type="ChEBI" id="CHEBI:57706"/>
        <dbReference type="ChEBI" id="CHEBI:73036"/>
        <dbReference type="EC" id="4.1.2.52"/>
    </reaction>
</comment>
<comment type="cofactor">
    <cofactor evidence="1">
        <name>a divalent metal cation</name>
        <dbReference type="ChEBI" id="CHEBI:60240"/>
    </cofactor>
    <text evidence="1">Binds 1 divalent metal cation per subunit.</text>
</comment>
<comment type="pathway">
    <text evidence="1">Aromatic compound metabolism; 4-hydroxyphenylacetate degradation; pyruvate and succinate semialdehyde from 4-hydroxyphenylacetate: step 7/7.</text>
</comment>
<comment type="subunit">
    <text evidence="1">Homohexamer; trimer of dimers.</text>
</comment>
<comment type="similarity">
    <text evidence="1">Belongs to the HpcH/HpaI aldolase family.</text>
</comment>
<reference key="1">
    <citation type="journal article" date="2009" name="PLoS ONE">
        <title>Salmonella paratyphi C: genetic divergence from Salmonella choleraesuis and pathogenic convergence with Salmonella typhi.</title>
        <authorList>
            <person name="Liu W.-Q."/>
            <person name="Feng Y."/>
            <person name="Wang Y."/>
            <person name="Zou Q.-H."/>
            <person name="Chen F."/>
            <person name="Guo J.-T."/>
            <person name="Peng Y.-H."/>
            <person name="Jin Y."/>
            <person name="Li Y.-G."/>
            <person name="Hu S.-N."/>
            <person name="Johnston R.N."/>
            <person name="Liu G.-R."/>
            <person name="Liu S.-L."/>
        </authorList>
    </citation>
    <scope>NUCLEOTIDE SEQUENCE [LARGE SCALE GENOMIC DNA]</scope>
    <source>
        <strain>RKS4594</strain>
    </source>
</reference>
<sequence length="263" mass="27857">MKNAFKDTLKAGRPQIGLWLGLANSYSAELLAGAGFDWLLIDGEHAPNNVQTVLTQLQAIAPYPSQPVVRPSWNDPVQIKQLLDVGAQTLLIPMVQNADEARNAVAATRYPPAGIRGVGSALARASRWNRIPDYLHQANDAMCVLVQIETREAMSNLASILDVDGIDGVFIGPADLSADMGFAGNPQHPEVQAAIENAIVQIRAAGKAPGILMANEPLAKRYLELGALFVAVGVDTTLLARGAEALAARFGVEKNLSGASGVY</sequence>
<organism>
    <name type="scientific">Salmonella paratyphi C (strain RKS4594)</name>
    <dbReference type="NCBI Taxonomy" id="476213"/>
    <lineage>
        <taxon>Bacteria</taxon>
        <taxon>Pseudomonadati</taxon>
        <taxon>Pseudomonadota</taxon>
        <taxon>Gammaproteobacteria</taxon>
        <taxon>Enterobacterales</taxon>
        <taxon>Enterobacteriaceae</taxon>
        <taxon>Salmonella</taxon>
    </lineage>
</organism>
<name>HPCH_SALPC</name>
<proteinExistence type="inferred from homology"/>